<dbReference type="EC" id="5.6.2.3" evidence="2"/>
<dbReference type="EMBL" id="L42023">
    <property type="protein sequence ID" value="AAC22045.1"/>
    <property type="molecule type" value="Genomic_DNA"/>
</dbReference>
<dbReference type="PIR" id="A64065">
    <property type="entry name" value="A64065"/>
</dbReference>
<dbReference type="RefSeq" id="NP_438548.1">
    <property type="nucleotide sequence ID" value="NC_000907.1"/>
</dbReference>
<dbReference type="SMR" id="P44680"/>
<dbReference type="STRING" id="71421.HI_0387"/>
<dbReference type="EnsemblBacteria" id="AAC22045">
    <property type="protein sequence ID" value="AAC22045"/>
    <property type="gene ID" value="HI_0387"/>
</dbReference>
<dbReference type="KEGG" id="hin:HI_0387"/>
<dbReference type="PATRIC" id="fig|71421.8.peg.405"/>
<dbReference type="eggNOG" id="COG1199">
    <property type="taxonomic scope" value="Bacteria"/>
</dbReference>
<dbReference type="HOGENOM" id="CLU_012117_2_0_6"/>
<dbReference type="OrthoDB" id="9805194at2"/>
<dbReference type="PhylomeDB" id="P44680"/>
<dbReference type="BioCyc" id="HINF71421:G1GJ1-402-MONOMER"/>
<dbReference type="Proteomes" id="UP000000579">
    <property type="component" value="Chromosome"/>
</dbReference>
<dbReference type="GO" id="GO:0005524">
    <property type="term" value="F:ATP binding"/>
    <property type="evidence" value="ECO:0007669"/>
    <property type="project" value="UniProtKB-KW"/>
</dbReference>
<dbReference type="GO" id="GO:0016887">
    <property type="term" value="F:ATP hydrolysis activity"/>
    <property type="evidence" value="ECO:0007669"/>
    <property type="project" value="RHEA"/>
</dbReference>
<dbReference type="GO" id="GO:0003677">
    <property type="term" value="F:DNA binding"/>
    <property type="evidence" value="ECO:0007669"/>
    <property type="project" value="UniProtKB-KW"/>
</dbReference>
<dbReference type="GO" id="GO:0003678">
    <property type="term" value="F:DNA helicase activity"/>
    <property type="evidence" value="ECO:0000318"/>
    <property type="project" value="GO_Central"/>
</dbReference>
<dbReference type="GO" id="GO:0051536">
    <property type="term" value="F:iron-sulfur cluster binding"/>
    <property type="evidence" value="ECO:0007669"/>
    <property type="project" value="UniProtKB-KW"/>
</dbReference>
<dbReference type="GO" id="GO:0046872">
    <property type="term" value="F:metal ion binding"/>
    <property type="evidence" value="ECO:0007669"/>
    <property type="project" value="UniProtKB-KW"/>
</dbReference>
<dbReference type="GO" id="GO:0006281">
    <property type="term" value="P:DNA repair"/>
    <property type="evidence" value="ECO:0000318"/>
    <property type="project" value="GO_Central"/>
</dbReference>
<dbReference type="FunFam" id="3.40.50.300:FF:000466">
    <property type="entry name" value="ATP-dependent DNA helicase"/>
    <property type="match status" value="1"/>
</dbReference>
<dbReference type="FunFam" id="3.40.50.300:FF:000499">
    <property type="entry name" value="ATP-dependent DNA helicase"/>
    <property type="match status" value="1"/>
</dbReference>
<dbReference type="Gene3D" id="3.40.50.300">
    <property type="entry name" value="P-loop containing nucleotide triphosphate hydrolases"/>
    <property type="match status" value="2"/>
</dbReference>
<dbReference type="InterPro" id="IPR006555">
    <property type="entry name" value="ATP-dep_Helicase_C"/>
</dbReference>
<dbReference type="InterPro" id="IPR045028">
    <property type="entry name" value="DinG/Rad3-like"/>
</dbReference>
<dbReference type="InterPro" id="IPR014013">
    <property type="entry name" value="Helic_SF1/SF2_ATP-bd_DinG/Rad3"/>
</dbReference>
<dbReference type="InterPro" id="IPR014001">
    <property type="entry name" value="Helicase_ATP-bd"/>
</dbReference>
<dbReference type="InterPro" id="IPR027417">
    <property type="entry name" value="P-loop_NTPase"/>
</dbReference>
<dbReference type="InterPro" id="IPR010614">
    <property type="entry name" value="RAD3-like_helicase_DEAD"/>
</dbReference>
<dbReference type="PANTHER" id="PTHR11472">
    <property type="entry name" value="DNA REPAIR DEAD HELICASE RAD3/XP-D SUBFAMILY MEMBER"/>
    <property type="match status" value="1"/>
</dbReference>
<dbReference type="PANTHER" id="PTHR11472:SF34">
    <property type="entry name" value="REGULATOR OF TELOMERE ELONGATION HELICASE 1"/>
    <property type="match status" value="1"/>
</dbReference>
<dbReference type="Pfam" id="PF06733">
    <property type="entry name" value="DEAD_2"/>
    <property type="match status" value="1"/>
</dbReference>
<dbReference type="Pfam" id="PF13307">
    <property type="entry name" value="Helicase_C_2"/>
    <property type="match status" value="1"/>
</dbReference>
<dbReference type="SMART" id="SM00487">
    <property type="entry name" value="DEXDc"/>
    <property type="match status" value="1"/>
</dbReference>
<dbReference type="SMART" id="SM00491">
    <property type="entry name" value="HELICc2"/>
    <property type="match status" value="1"/>
</dbReference>
<dbReference type="SUPFAM" id="SSF52540">
    <property type="entry name" value="P-loop containing nucleoside triphosphate hydrolases"/>
    <property type="match status" value="2"/>
</dbReference>
<dbReference type="PROSITE" id="PS51193">
    <property type="entry name" value="HELICASE_ATP_BIND_2"/>
    <property type="match status" value="1"/>
</dbReference>
<dbReference type="PROSITE" id="PS51194">
    <property type="entry name" value="HELICASE_CTER"/>
    <property type="match status" value="1"/>
</dbReference>
<accession>P44680</accession>
<proteinExistence type="inferred from homology"/>
<gene>
    <name evidence="5" type="primary">yoaA</name>
    <name type="ordered locus">HI_0387</name>
</gene>
<reference key="1">
    <citation type="journal article" date="1995" name="Science">
        <title>Whole-genome random sequencing and assembly of Haemophilus influenzae Rd.</title>
        <authorList>
            <person name="Fleischmann R.D."/>
            <person name="Adams M.D."/>
            <person name="White O."/>
            <person name="Clayton R.A."/>
            <person name="Kirkness E.F."/>
            <person name="Kerlavage A.R."/>
            <person name="Bult C.J."/>
            <person name="Tomb J.-F."/>
            <person name="Dougherty B.A."/>
            <person name="Merrick J.M."/>
            <person name="McKenney K."/>
            <person name="Sutton G.G."/>
            <person name="FitzHugh W."/>
            <person name="Fields C.A."/>
            <person name="Gocayne J.D."/>
            <person name="Scott J.D."/>
            <person name="Shirley R."/>
            <person name="Liu L.-I."/>
            <person name="Glodek A."/>
            <person name="Kelley J.M."/>
            <person name="Weidman J.F."/>
            <person name="Phillips C.A."/>
            <person name="Spriggs T."/>
            <person name="Hedblom E."/>
            <person name="Cotton M.D."/>
            <person name="Utterback T.R."/>
            <person name="Hanna M.C."/>
            <person name="Nguyen D.T."/>
            <person name="Saudek D.M."/>
            <person name="Brandon R.C."/>
            <person name="Fine L.D."/>
            <person name="Fritchman J.L."/>
            <person name="Fuhrmann J.L."/>
            <person name="Geoghagen N.S.M."/>
            <person name="Gnehm C.L."/>
            <person name="McDonald L.A."/>
            <person name="Small K.V."/>
            <person name="Fraser C.M."/>
            <person name="Smith H.O."/>
            <person name="Venter J.C."/>
        </authorList>
    </citation>
    <scope>NUCLEOTIDE SEQUENCE [LARGE SCALE GENOMIC DNA]</scope>
    <source>
        <strain>ATCC 51907 / DSM 11121 / KW20 / Rd</strain>
    </source>
</reference>
<protein>
    <recommendedName>
        <fullName evidence="5">ATP-dependent DNA helicase YoaA</fullName>
        <ecNumber evidence="2">5.6.2.3</ecNumber>
    </recommendedName>
</protein>
<evidence type="ECO:0000250" key="1">
    <source>
        <dbReference type="UniProtKB" id="P27296"/>
    </source>
</evidence>
<evidence type="ECO:0000250" key="2">
    <source>
        <dbReference type="UniProtKB" id="P76257"/>
    </source>
</evidence>
<evidence type="ECO:0000255" key="3">
    <source>
        <dbReference type="PROSITE-ProRule" id="PRU00541"/>
    </source>
</evidence>
<evidence type="ECO:0000255" key="4">
    <source>
        <dbReference type="PROSITE-ProRule" id="PRU00542"/>
    </source>
</evidence>
<evidence type="ECO:0000305" key="5"/>
<organism>
    <name type="scientific">Haemophilus influenzae (strain ATCC 51907 / DSM 11121 / KW20 / Rd)</name>
    <dbReference type="NCBI Taxonomy" id="71421"/>
    <lineage>
        <taxon>Bacteria</taxon>
        <taxon>Pseudomonadati</taxon>
        <taxon>Pseudomonadota</taxon>
        <taxon>Gammaproteobacteria</taxon>
        <taxon>Pasteurellales</taxon>
        <taxon>Pasteurellaceae</taxon>
        <taxon>Haemophilus</taxon>
    </lineage>
</organism>
<comment type="function">
    <text evidence="2">Probably a 5'-3' DNA helicase.</text>
</comment>
<comment type="catalytic activity">
    <reaction evidence="2">
        <text>Couples ATP hydrolysis with the unwinding of duplex DNA at the replication fork by translocating in the 5'-3' direction. This creates two antiparallel DNA single strands (ssDNA). The leading ssDNA polymer is the template for DNA polymerase III holoenzyme which synthesizes a continuous strand.</text>
        <dbReference type="EC" id="5.6.2.3"/>
    </reaction>
</comment>
<comment type="catalytic activity">
    <reaction evidence="2">
        <text>ATP + H2O = ADP + phosphate + H(+)</text>
        <dbReference type="Rhea" id="RHEA:13065"/>
        <dbReference type="ChEBI" id="CHEBI:15377"/>
        <dbReference type="ChEBI" id="CHEBI:15378"/>
        <dbReference type="ChEBI" id="CHEBI:30616"/>
        <dbReference type="ChEBI" id="CHEBI:43474"/>
        <dbReference type="ChEBI" id="CHEBI:456216"/>
        <dbReference type="EC" id="5.6.2.3"/>
    </reaction>
</comment>
<comment type="cofactor">
    <cofactor evidence="1">
        <name>[4Fe-4S] cluster</name>
        <dbReference type="ChEBI" id="CHEBI:49883"/>
    </cofactor>
    <text evidence="1">Binds 1 [4Fe-4S] cluster.</text>
</comment>
<comment type="similarity">
    <text evidence="5">Belongs to the helicase family. DinG subfamily.</text>
</comment>
<feature type="chain" id="PRO_0000102007" description="ATP-dependent DNA helicase YoaA">
    <location>
        <begin position="1"/>
        <end position="640"/>
    </location>
</feature>
<feature type="domain" description="Helicase ATP-binding" evidence="3">
    <location>
        <begin position="16"/>
        <end position="278"/>
    </location>
</feature>
<feature type="domain" description="Helicase C-terminal" evidence="4">
    <location>
        <begin position="458"/>
        <end position="634"/>
    </location>
</feature>
<feature type="short sequence motif" description="DEAH box" evidence="3">
    <location>
        <begin position="125"/>
        <end position="128"/>
    </location>
</feature>
<feature type="short sequence motif" description="DEAH box" evidence="3">
    <location>
        <begin position="231"/>
        <end position="234"/>
    </location>
</feature>
<feature type="binding site" evidence="3">
    <location>
        <begin position="51"/>
        <end position="58"/>
    </location>
    <ligand>
        <name>ATP</name>
        <dbReference type="ChEBI" id="CHEBI:30616"/>
    </ligand>
</feature>
<feature type="binding site" evidence="1">
    <location>
        <position position="114"/>
    </location>
    <ligand>
        <name>[4Fe-4S] cluster</name>
        <dbReference type="ChEBI" id="CHEBI:49883"/>
    </ligand>
</feature>
<feature type="binding site" evidence="1">
    <location>
        <position position="174"/>
    </location>
    <ligand>
        <name>[4Fe-4S] cluster</name>
        <dbReference type="ChEBI" id="CHEBI:49883"/>
    </ligand>
</feature>
<feature type="binding site" evidence="1">
    <location>
        <position position="179"/>
    </location>
    <ligand>
        <name>[4Fe-4S] cluster</name>
        <dbReference type="ChEBI" id="CHEBI:49883"/>
    </ligand>
</feature>
<feature type="binding site" evidence="1">
    <location>
        <position position="185"/>
    </location>
    <ligand>
        <name>[4Fe-4S] cluster</name>
        <dbReference type="ChEBI" id="CHEBI:49883"/>
    </ligand>
</feature>
<sequence length="640" mass="71531">MDYENQIANIFSLNGELSQNIKGFRPRAEQLEMAYAVGKAIQNKSSLVIEAGTGTGKTFAYLAPALVFGKKTIISTGSKNLQDQLFNRDLPAIKKALNFTGKIALLKGRANYLCLERLDQVIAQGVLGDKSVLAELSKVRKWNNSTKTGDFTECIELAEDSPIIPQLTSTAESCLGTDCPNYSECYVASARKKALNADLVVVNHHLFFADMAVKESGFGELIPNAEVIIFDEAHQLPDIASQYFGQSLTSRQLFDLCKDINIVYRTELKDMQQLGTTSDTLLKVVQDFRLLLGNGSNVRGNWRELYTQSAVKKAFELLQEKIDFLSEVIKLALGRSQTLDSIFERVESIKIQLKRLSETNIVGYCYWYEGNGRQFGLHITPLTVADKFGAQLEAKEAAWIFTSATLEVGGTFNHFCQRLGIENATQKILYSPFNYPEQSLLCVPRYLPNTNQMNTLNSLGEILLPVIEANKGRCFVLCTSYSMMRGLAEYFREKSHLSILLQGETSKGKLLEQFIKETHSVLVATSSFWEGVDVRGDALSLVIIDKLPFTAPDEPLLKARIEDCRLQGGDPFNDIQIPEAVITLKQGVGRLIRDVTDRGVVIICDNRLVMRNYGETFLKSLPNSSRTRDLNKVIQFLQNK</sequence>
<name>YOAA_HAEIN</name>
<keyword id="KW-0067">ATP-binding</keyword>
<keyword id="KW-0238">DNA-binding</keyword>
<keyword id="KW-0347">Helicase</keyword>
<keyword id="KW-0378">Hydrolase</keyword>
<keyword id="KW-0408">Iron</keyword>
<keyword id="KW-0411">Iron-sulfur</keyword>
<keyword id="KW-0413">Isomerase</keyword>
<keyword id="KW-0479">Metal-binding</keyword>
<keyword id="KW-0547">Nucleotide-binding</keyword>
<keyword id="KW-1185">Reference proteome</keyword>